<comment type="function">
    <text evidence="1">Catalyzes the conversion of dihydroorotate to orotate with quinone as electron acceptor.</text>
</comment>
<comment type="catalytic activity">
    <reaction evidence="1">
        <text>(S)-dihydroorotate + a quinone = orotate + a quinol</text>
        <dbReference type="Rhea" id="RHEA:30187"/>
        <dbReference type="ChEBI" id="CHEBI:24646"/>
        <dbReference type="ChEBI" id="CHEBI:30839"/>
        <dbReference type="ChEBI" id="CHEBI:30864"/>
        <dbReference type="ChEBI" id="CHEBI:132124"/>
        <dbReference type="EC" id="1.3.5.2"/>
    </reaction>
</comment>
<comment type="cofactor">
    <cofactor evidence="1">
        <name>FMN</name>
        <dbReference type="ChEBI" id="CHEBI:58210"/>
    </cofactor>
    <text evidence="1">Binds 1 FMN per subunit.</text>
</comment>
<comment type="pathway">
    <text evidence="1">Pyrimidine metabolism; UMP biosynthesis via de novo pathway; orotate from (S)-dihydroorotate (quinone route): step 1/1.</text>
</comment>
<comment type="subunit">
    <text evidence="1">Monomer.</text>
</comment>
<comment type="subcellular location">
    <subcellularLocation>
        <location evidence="1">Cell membrane</location>
        <topology evidence="1">Peripheral membrane protein</topology>
    </subcellularLocation>
</comment>
<comment type="similarity">
    <text evidence="1">Belongs to the dihydroorotate dehydrogenase family. Type 2 subfamily.</text>
</comment>
<sequence length="339" mass="36559">MFYKIAQKVMFQMDPERAHHLAIGSLKMTANSPLTCLYGQTITPAPVSVMGLTFPNPVGLAAGMDKDGESIDAFHAMGFGHVEVGTVTPRPQPGNDLPRLFRLKPAKGIINRMGFNNKGVDNLVKNLIAKKTDIMVGVNIGKNKDTPVEQGKDDYLICMDKVYLHAAYIAVNISSPNTPGLRSLQYGDLLDELLSAIKTKQLELAEKHKKYVPIALKIAPDLTIEEIENIAQALIKNKFDGAIATNTTLTRDGVSGLANANESGGLSGKPLTELSTKVIKQLAICLKGQIPIIGVGGINSAEDALAKFDAGATMVQIYSGFIYQGPKLIKEIVNAYRLK</sequence>
<accession>B8E984</accession>
<keyword id="KW-1003">Cell membrane</keyword>
<keyword id="KW-0285">Flavoprotein</keyword>
<keyword id="KW-0288">FMN</keyword>
<keyword id="KW-0472">Membrane</keyword>
<keyword id="KW-0560">Oxidoreductase</keyword>
<keyword id="KW-0665">Pyrimidine biosynthesis</keyword>
<proteinExistence type="inferred from homology"/>
<organism>
    <name type="scientific">Shewanella baltica (strain OS223)</name>
    <dbReference type="NCBI Taxonomy" id="407976"/>
    <lineage>
        <taxon>Bacteria</taxon>
        <taxon>Pseudomonadati</taxon>
        <taxon>Pseudomonadota</taxon>
        <taxon>Gammaproteobacteria</taxon>
        <taxon>Alteromonadales</taxon>
        <taxon>Shewanellaceae</taxon>
        <taxon>Shewanella</taxon>
    </lineage>
</organism>
<gene>
    <name evidence="1" type="primary">pyrD</name>
    <name type="ordered locus">Sbal223_1912</name>
</gene>
<evidence type="ECO:0000255" key="1">
    <source>
        <dbReference type="HAMAP-Rule" id="MF_00225"/>
    </source>
</evidence>
<reference key="1">
    <citation type="submission" date="2008-12" db="EMBL/GenBank/DDBJ databases">
        <title>Complete sequence of chromosome of Shewanella baltica OS223.</title>
        <authorList>
            <consortium name="US DOE Joint Genome Institute"/>
            <person name="Lucas S."/>
            <person name="Copeland A."/>
            <person name="Lapidus A."/>
            <person name="Glavina del Rio T."/>
            <person name="Dalin E."/>
            <person name="Tice H."/>
            <person name="Bruce D."/>
            <person name="Goodwin L."/>
            <person name="Pitluck S."/>
            <person name="Chertkov O."/>
            <person name="Meincke L."/>
            <person name="Brettin T."/>
            <person name="Detter J.C."/>
            <person name="Han C."/>
            <person name="Kuske C.R."/>
            <person name="Larimer F."/>
            <person name="Land M."/>
            <person name="Hauser L."/>
            <person name="Kyrpides N."/>
            <person name="Ovchinnikova G."/>
            <person name="Brettar I."/>
            <person name="Rodrigues J."/>
            <person name="Konstantinidis K."/>
            <person name="Tiedje J."/>
        </authorList>
    </citation>
    <scope>NUCLEOTIDE SEQUENCE [LARGE SCALE GENOMIC DNA]</scope>
    <source>
        <strain>OS223</strain>
    </source>
</reference>
<dbReference type="EC" id="1.3.5.2" evidence="1"/>
<dbReference type="EMBL" id="CP001252">
    <property type="protein sequence ID" value="ACK46417.1"/>
    <property type="molecule type" value="Genomic_DNA"/>
</dbReference>
<dbReference type="RefSeq" id="WP_012587496.1">
    <property type="nucleotide sequence ID" value="NC_011663.1"/>
</dbReference>
<dbReference type="SMR" id="B8E984"/>
<dbReference type="KEGG" id="sbp:Sbal223_1912"/>
<dbReference type="HOGENOM" id="CLU_013640_2_0_6"/>
<dbReference type="UniPathway" id="UPA00070">
    <property type="reaction ID" value="UER00946"/>
</dbReference>
<dbReference type="Proteomes" id="UP000002507">
    <property type="component" value="Chromosome"/>
</dbReference>
<dbReference type="GO" id="GO:0005737">
    <property type="term" value="C:cytoplasm"/>
    <property type="evidence" value="ECO:0007669"/>
    <property type="project" value="InterPro"/>
</dbReference>
<dbReference type="GO" id="GO:0005886">
    <property type="term" value="C:plasma membrane"/>
    <property type="evidence" value="ECO:0007669"/>
    <property type="project" value="UniProtKB-SubCell"/>
</dbReference>
<dbReference type="GO" id="GO:0106430">
    <property type="term" value="F:dihydroorotate dehydrogenase (quinone) activity"/>
    <property type="evidence" value="ECO:0007669"/>
    <property type="project" value="UniProtKB-EC"/>
</dbReference>
<dbReference type="GO" id="GO:0006207">
    <property type="term" value="P:'de novo' pyrimidine nucleobase biosynthetic process"/>
    <property type="evidence" value="ECO:0007669"/>
    <property type="project" value="InterPro"/>
</dbReference>
<dbReference type="GO" id="GO:0044205">
    <property type="term" value="P:'de novo' UMP biosynthetic process"/>
    <property type="evidence" value="ECO:0007669"/>
    <property type="project" value="UniProtKB-UniRule"/>
</dbReference>
<dbReference type="CDD" id="cd04738">
    <property type="entry name" value="DHOD_2_like"/>
    <property type="match status" value="1"/>
</dbReference>
<dbReference type="FunFam" id="3.20.20.70:FF:000028">
    <property type="entry name" value="Dihydroorotate dehydrogenase (quinone)"/>
    <property type="match status" value="1"/>
</dbReference>
<dbReference type="Gene3D" id="3.20.20.70">
    <property type="entry name" value="Aldolase class I"/>
    <property type="match status" value="1"/>
</dbReference>
<dbReference type="HAMAP" id="MF_00225">
    <property type="entry name" value="DHO_dh_type2"/>
    <property type="match status" value="1"/>
</dbReference>
<dbReference type="InterPro" id="IPR013785">
    <property type="entry name" value="Aldolase_TIM"/>
</dbReference>
<dbReference type="InterPro" id="IPR050074">
    <property type="entry name" value="DHO_dehydrogenase"/>
</dbReference>
<dbReference type="InterPro" id="IPR012135">
    <property type="entry name" value="Dihydroorotate_DH_1_2"/>
</dbReference>
<dbReference type="InterPro" id="IPR005719">
    <property type="entry name" value="Dihydroorotate_DH_2"/>
</dbReference>
<dbReference type="InterPro" id="IPR005720">
    <property type="entry name" value="Dihydroorotate_DH_cat"/>
</dbReference>
<dbReference type="InterPro" id="IPR001295">
    <property type="entry name" value="Dihydroorotate_DH_CS"/>
</dbReference>
<dbReference type="NCBIfam" id="NF003644">
    <property type="entry name" value="PRK05286.1-1"/>
    <property type="match status" value="1"/>
</dbReference>
<dbReference type="NCBIfam" id="NF003645">
    <property type="entry name" value="PRK05286.1-2"/>
    <property type="match status" value="1"/>
</dbReference>
<dbReference type="NCBIfam" id="NF003646">
    <property type="entry name" value="PRK05286.1-4"/>
    <property type="match status" value="1"/>
</dbReference>
<dbReference type="NCBIfam" id="NF003652">
    <property type="entry name" value="PRK05286.2-5"/>
    <property type="match status" value="1"/>
</dbReference>
<dbReference type="NCBIfam" id="TIGR01036">
    <property type="entry name" value="pyrD_sub2"/>
    <property type="match status" value="1"/>
</dbReference>
<dbReference type="PANTHER" id="PTHR48109:SF4">
    <property type="entry name" value="DIHYDROOROTATE DEHYDROGENASE (QUINONE), MITOCHONDRIAL"/>
    <property type="match status" value="1"/>
</dbReference>
<dbReference type="PANTHER" id="PTHR48109">
    <property type="entry name" value="DIHYDROOROTATE DEHYDROGENASE (QUINONE), MITOCHONDRIAL-RELATED"/>
    <property type="match status" value="1"/>
</dbReference>
<dbReference type="Pfam" id="PF01180">
    <property type="entry name" value="DHO_dh"/>
    <property type="match status" value="1"/>
</dbReference>
<dbReference type="PIRSF" id="PIRSF000164">
    <property type="entry name" value="DHO_oxidase"/>
    <property type="match status" value="1"/>
</dbReference>
<dbReference type="SUPFAM" id="SSF51395">
    <property type="entry name" value="FMN-linked oxidoreductases"/>
    <property type="match status" value="1"/>
</dbReference>
<dbReference type="PROSITE" id="PS00911">
    <property type="entry name" value="DHODEHASE_1"/>
    <property type="match status" value="1"/>
</dbReference>
<dbReference type="PROSITE" id="PS00912">
    <property type="entry name" value="DHODEHASE_2"/>
    <property type="match status" value="1"/>
</dbReference>
<protein>
    <recommendedName>
        <fullName evidence="1">Dihydroorotate dehydrogenase (quinone)</fullName>
        <ecNumber evidence="1">1.3.5.2</ecNumber>
    </recommendedName>
    <alternativeName>
        <fullName evidence="1">DHOdehase</fullName>
        <shortName evidence="1">DHOD</shortName>
        <shortName evidence="1">DHODase</shortName>
    </alternativeName>
    <alternativeName>
        <fullName evidence="1">Dihydroorotate oxidase</fullName>
    </alternativeName>
</protein>
<feature type="chain" id="PRO_1000195090" description="Dihydroorotate dehydrogenase (quinone)">
    <location>
        <begin position="1"/>
        <end position="339"/>
    </location>
</feature>
<feature type="active site" description="Nucleophile" evidence="1">
    <location>
        <position position="175"/>
    </location>
</feature>
<feature type="binding site" evidence="1">
    <location>
        <begin position="62"/>
        <end position="66"/>
    </location>
    <ligand>
        <name>FMN</name>
        <dbReference type="ChEBI" id="CHEBI:58210"/>
    </ligand>
</feature>
<feature type="binding site" evidence="1">
    <location>
        <position position="66"/>
    </location>
    <ligand>
        <name>substrate</name>
    </ligand>
</feature>
<feature type="binding site" evidence="1">
    <location>
        <position position="86"/>
    </location>
    <ligand>
        <name>FMN</name>
        <dbReference type="ChEBI" id="CHEBI:58210"/>
    </ligand>
</feature>
<feature type="binding site" evidence="1">
    <location>
        <begin position="111"/>
        <end position="115"/>
    </location>
    <ligand>
        <name>substrate</name>
    </ligand>
</feature>
<feature type="binding site" evidence="1">
    <location>
        <position position="139"/>
    </location>
    <ligand>
        <name>FMN</name>
        <dbReference type="ChEBI" id="CHEBI:58210"/>
    </ligand>
</feature>
<feature type="binding site" evidence="1">
    <location>
        <position position="172"/>
    </location>
    <ligand>
        <name>FMN</name>
        <dbReference type="ChEBI" id="CHEBI:58210"/>
    </ligand>
</feature>
<feature type="binding site" evidence="1">
    <location>
        <position position="172"/>
    </location>
    <ligand>
        <name>substrate</name>
    </ligand>
</feature>
<feature type="binding site" evidence="1">
    <location>
        <position position="177"/>
    </location>
    <ligand>
        <name>substrate</name>
    </ligand>
</feature>
<feature type="binding site" evidence="1">
    <location>
        <position position="217"/>
    </location>
    <ligand>
        <name>FMN</name>
        <dbReference type="ChEBI" id="CHEBI:58210"/>
    </ligand>
</feature>
<feature type="binding site" evidence="1">
    <location>
        <position position="245"/>
    </location>
    <ligand>
        <name>FMN</name>
        <dbReference type="ChEBI" id="CHEBI:58210"/>
    </ligand>
</feature>
<feature type="binding site" evidence="1">
    <location>
        <begin position="246"/>
        <end position="247"/>
    </location>
    <ligand>
        <name>substrate</name>
    </ligand>
</feature>
<feature type="binding site" evidence="1">
    <location>
        <position position="268"/>
    </location>
    <ligand>
        <name>FMN</name>
        <dbReference type="ChEBI" id="CHEBI:58210"/>
    </ligand>
</feature>
<feature type="binding site" evidence="1">
    <location>
        <position position="297"/>
    </location>
    <ligand>
        <name>FMN</name>
        <dbReference type="ChEBI" id="CHEBI:58210"/>
    </ligand>
</feature>
<feature type="binding site" evidence="1">
    <location>
        <begin position="318"/>
        <end position="319"/>
    </location>
    <ligand>
        <name>FMN</name>
        <dbReference type="ChEBI" id="CHEBI:58210"/>
    </ligand>
</feature>
<name>PYRD_SHEB2</name>